<name>ARGJ_PODAN</name>
<organism>
    <name type="scientific">Podospora anserina (strain S / ATCC MYA-4624 / DSM 980 / FGSC 10383)</name>
    <name type="common">Pleurage anserina</name>
    <dbReference type="NCBI Taxonomy" id="515849"/>
    <lineage>
        <taxon>Eukaryota</taxon>
        <taxon>Fungi</taxon>
        <taxon>Dikarya</taxon>
        <taxon>Ascomycota</taxon>
        <taxon>Pezizomycotina</taxon>
        <taxon>Sordariomycetes</taxon>
        <taxon>Sordariomycetidae</taxon>
        <taxon>Sordariales</taxon>
        <taxon>Podosporaceae</taxon>
        <taxon>Podospora</taxon>
        <taxon>Podospora anserina</taxon>
    </lineage>
</organism>
<feature type="transit peptide" description="Mitochondrion" evidence="1">
    <location>
        <begin position="1"/>
        <end position="23"/>
    </location>
</feature>
<feature type="chain" id="PRO_0000398090" description="Arginine biosynthesis bifunctional protein ArgJ alpha chain" evidence="1">
    <location>
        <begin position="24"/>
        <end position="237"/>
    </location>
</feature>
<feature type="chain" id="PRO_0000398091" description="Arginine biosynthesis bifunctional protein ArgJ beta chain" evidence="1">
    <location>
        <begin position="238"/>
        <end position="468"/>
    </location>
</feature>
<feature type="active site" description="Nucleophile" evidence="1">
    <location>
        <position position="238"/>
    </location>
</feature>
<feature type="binding site" evidence="1">
    <location>
        <position position="198"/>
    </location>
    <ligand>
        <name>substrate</name>
    </ligand>
</feature>
<feature type="binding site" evidence="1">
    <location>
        <position position="227"/>
    </location>
    <ligand>
        <name>substrate</name>
    </ligand>
</feature>
<feature type="binding site" evidence="1">
    <location>
        <position position="238"/>
    </location>
    <ligand>
        <name>substrate</name>
    </ligand>
</feature>
<feature type="binding site" evidence="1">
    <location>
        <position position="324"/>
    </location>
    <ligand>
        <name>substrate</name>
    </ligand>
</feature>
<feature type="binding site" evidence="1">
    <location>
        <position position="463"/>
    </location>
    <ligand>
        <name>substrate</name>
    </ligand>
</feature>
<feature type="binding site" evidence="1">
    <location>
        <position position="468"/>
    </location>
    <ligand>
        <name>substrate</name>
    </ligand>
</feature>
<feature type="site" description="Involved in the stabilization of negative charge on the oxyanion by the formation of the oxyanion hole" evidence="1">
    <location>
        <position position="159"/>
    </location>
</feature>
<feature type="site" description="Involved in the stabilization of negative charge on the oxyanion by the formation of the oxyanion hole" evidence="1">
    <location>
        <position position="160"/>
    </location>
</feature>
<feature type="site" description="Cleavage; by autolysis" evidence="1">
    <location>
        <begin position="237"/>
        <end position="238"/>
    </location>
</feature>
<comment type="function">
    <text evidence="1">Catalyzes two activities which are involved in the cyclic version of arginine biosynthesis: the synthesis of acetylglutamate from glutamate and acetyl-CoA, and of ornithine by transacetylation between acetylornithine and glutamate.</text>
</comment>
<comment type="catalytic activity">
    <reaction evidence="1">
        <text>N(2)-acetyl-L-ornithine + L-glutamate = N-acetyl-L-glutamate + L-ornithine</text>
        <dbReference type="Rhea" id="RHEA:15349"/>
        <dbReference type="ChEBI" id="CHEBI:29985"/>
        <dbReference type="ChEBI" id="CHEBI:44337"/>
        <dbReference type="ChEBI" id="CHEBI:46911"/>
        <dbReference type="ChEBI" id="CHEBI:57805"/>
        <dbReference type="EC" id="2.3.1.35"/>
    </reaction>
</comment>
<comment type="catalytic activity">
    <reaction evidence="1">
        <text>L-glutamate + acetyl-CoA = N-acetyl-L-glutamate + CoA + H(+)</text>
        <dbReference type="Rhea" id="RHEA:24292"/>
        <dbReference type="ChEBI" id="CHEBI:15378"/>
        <dbReference type="ChEBI" id="CHEBI:29985"/>
        <dbReference type="ChEBI" id="CHEBI:44337"/>
        <dbReference type="ChEBI" id="CHEBI:57287"/>
        <dbReference type="ChEBI" id="CHEBI:57288"/>
        <dbReference type="EC" id="2.3.1.1"/>
    </reaction>
</comment>
<comment type="pathway">
    <text evidence="1">Amino-acid biosynthesis; L-arginine biosynthesis; L-ornithine and N-acetyl-L-glutamate from L-glutamate and N(2)-acetyl-L-ornithine (cyclic): step 1/1.</text>
</comment>
<comment type="pathway">
    <text evidence="1">Amino-acid biosynthesis; L-arginine biosynthesis; N(2)-acetyl-L-ornithine from L-glutamate: step 1/4.</text>
</comment>
<comment type="subunit">
    <text evidence="1">Heterodimer of an alpha and a beta chain.</text>
</comment>
<comment type="subcellular location">
    <subcellularLocation>
        <location evidence="1">Mitochondrion matrix</location>
    </subcellularLocation>
</comment>
<comment type="PTM">
    <text evidence="1">The alpha and beta chains are autoproteolytically processed from a single precursor protein within the mitochondrion.</text>
</comment>
<comment type="similarity">
    <text evidence="1">Belongs to the ArgJ family.</text>
</comment>
<protein>
    <recommendedName>
        <fullName evidence="1">Arginine biosynthesis bifunctional protein ArgJ, mitochondrial</fullName>
    </recommendedName>
    <domain>
        <recommendedName>
            <fullName evidence="1">Glutamate N-acetyltransferase</fullName>
            <shortName evidence="1">GAT</shortName>
            <ecNumber evidence="1">2.3.1.35</ecNumber>
        </recommendedName>
        <alternativeName>
            <fullName evidence="1">Ornithine acetyltransferase</fullName>
            <shortName evidence="1">OATase</shortName>
        </alternativeName>
        <alternativeName>
            <fullName evidence="1">Ornithine transacetylase</fullName>
        </alternativeName>
    </domain>
    <domain>
        <recommendedName>
            <fullName evidence="1">Amino-acid acetyltransferase</fullName>
            <ecNumber evidence="1">2.3.1.1</ecNumber>
        </recommendedName>
        <alternativeName>
            <fullName evidence="1">N-acetylglutamate synthase</fullName>
            <shortName evidence="1">AGS</shortName>
        </alternativeName>
    </domain>
    <component>
        <recommendedName>
            <fullName evidence="1">Arginine biosynthesis bifunctional protein ArgJ alpha chain</fullName>
        </recommendedName>
    </component>
    <component>
        <recommendedName>
            <fullName evidence="1">Arginine biosynthesis bifunctional protein ArgJ beta chain</fullName>
        </recommendedName>
    </component>
</protein>
<evidence type="ECO:0000255" key="1">
    <source>
        <dbReference type="HAMAP-Rule" id="MF_03124"/>
    </source>
</evidence>
<reference key="1">
    <citation type="journal article" date="2008" name="Genome Biol.">
        <title>The genome sequence of the model ascomycete fungus Podospora anserina.</title>
        <authorList>
            <person name="Espagne E."/>
            <person name="Lespinet O."/>
            <person name="Malagnac F."/>
            <person name="Da Silva C."/>
            <person name="Jaillon O."/>
            <person name="Porcel B.M."/>
            <person name="Couloux A."/>
            <person name="Aury J.-M."/>
            <person name="Segurens B."/>
            <person name="Poulain J."/>
            <person name="Anthouard V."/>
            <person name="Grossetete S."/>
            <person name="Khalili H."/>
            <person name="Coppin E."/>
            <person name="Dequard-Chablat M."/>
            <person name="Picard M."/>
            <person name="Contamine V."/>
            <person name="Arnaise S."/>
            <person name="Bourdais A."/>
            <person name="Berteaux-Lecellier V."/>
            <person name="Gautheret D."/>
            <person name="de Vries R.P."/>
            <person name="Battaglia E."/>
            <person name="Coutinho P.M."/>
            <person name="Danchin E.G.J."/>
            <person name="Henrissat B."/>
            <person name="El Khoury R."/>
            <person name="Sainsard-Chanet A."/>
            <person name="Boivin A."/>
            <person name="Pinan-Lucarre B."/>
            <person name="Sellem C.H."/>
            <person name="Debuchy R."/>
            <person name="Wincker P."/>
            <person name="Weissenbach J."/>
            <person name="Silar P."/>
        </authorList>
    </citation>
    <scope>NUCLEOTIDE SEQUENCE [LARGE SCALE GENOMIC DNA]</scope>
    <source>
        <strain>S / ATCC MYA-4624 / DSM 980 / FGSC 10383</strain>
    </source>
</reference>
<reference key="2">
    <citation type="journal article" date="2014" name="Genetics">
        <title>Maintaining two mating types: Structure of the mating type locus and its role in heterokaryosis in Podospora anserina.</title>
        <authorList>
            <person name="Grognet P."/>
            <person name="Bidard F."/>
            <person name="Kuchly C."/>
            <person name="Tong L.C.H."/>
            <person name="Coppin E."/>
            <person name="Benkhali J.A."/>
            <person name="Couloux A."/>
            <person name="Wincker P."/>
            <person name="Debuchy R."/>
            <person name="Silar P."/>
        </authorList>
    </citation>
    <scope>GENOME REANNOTATION</scope>
    <source>
        <strain>S / ATCC MYA-4624 / DSM 980 / FGSC 10383</strain>
    </source>
</reference>
<dbReference type="EC" id="2.3.1.35" evidence="1"/>
<dbReference type="EC" id="2.3.1.1" evidence="1"/>
<dbReference type="EMBL" id="CU640366">
    <property type="protein sequence ID" value="CAP72851.1"/>
    <property type="molecule type" value="Genomic_DNA"/>
</dbReference>
<dbReference type="EMBL" id="FO904937">
    <property type="protein sequence ID" value="CDP25250.1"/>
    <property type="molecule type" value="Genomic_DNA"/>
</dbReference>
<dbReference type="RefSeq" id="XP_001911026.1">
    <property type="nucleotide sequence ID" value="XM_001910991.1"/>
</dbReference>
<dbReference type="SMR" id="B2B4X6"/>
<dbReference type="FunCoup" id="B2B4X6">
    <property type="interactions" value="283"/>
</dbReference>
<dbReference type="STRING" id="515849.B2B4X6"/>
<dbReference type="MEROPS" id="T05.001"/>
<dbReference type="GeneID" id="6195740"/>
<dbReference type="KEGG" id="pan:PODANSg8068"/>
<dbReference type="VEuPathDB" id="FungiDB:PODANS_2_2830"/>
<dbReference type="eggNOG" id="KOG2786">
    <property type="taxonomic scope" value="Eukaryota"/>
</dbReference>
<dbReference type="HOGENOM" id="CLU_027172_1_0_1"/>
<dbReference type="InParanoid" id="B2B4X6"/>
<dbReference type="OrthoDB" id="4199794at2759"/>
<dbReference type="UniPathway" id="UPA00068">
    <property type="reaction ID" value="UER00106"/>
</dbReference>
<dbReference type="UniPathway" id="UPA00068">
    <property type="reaction ID" value="UER00111"/>
</dbReference>
<dbReference type="Proteomes" id="UP000001197">
    <property type="component" value="Chromosome 2"/>
</dbReference>
<dbReference type="GO" id="GO:0005759">
    <property type="term" value="C:mitochondrial matrix"/>
    <property type="evidence" value="ECO:0007669"/>
    <property type="project" value="UniProtKB-SubCell"/>
</dbReference>
<dbReference type="GO" id="GO:0004358">
    <property type="term" value="F:glutamate N-acetyltransferase activity"/>
    <property type="evidence" value="ECO:0007669"/>
    <property type="project" value="UniProtKB-UniRule"/>
</dbReference>
<dbReference type="GO" id="GO:0004042">
    <property type="term" value="F:L-glutamate N-acetyltransferase activity"/>
    <property type="evidence" value="ECO:0007669"/>
    <property type="project" value="UniProtKB-UniRule"/>
</dbReference>
<dbReference type="GO" id="GO:0006526">
    <property type="term" value="P:L-arginine biosynthetic process"/>
    <property type="evidence" value="ECO:0007669"/>
    <property type="project" value="UniProtKB-UniRule"/>
</dbReference>
<dbReference type="GO" id="GO:0006592">
    <property type="term" value="P:ornithine biosynthetic process"/>
    <property type="evidence" value="ECO:0007669"/>
    <property type="project" value="TreeGrafter"/>
</dbReference>
<dbReference type="CDD" id="cd02152">
    <property type="entry name" value="OAT"/>
    <property type="match status" value="1"/>
</dbReference>
<dbReference type="FunFam" id="3.60.70.12:FF:000001">
    <property type="entry name" value="Arginine biosynthesis bifunctional protein ArgJ, chloroplastic"/>
    <property type="match status" value="1"/>
</dbReference>
<dbReference type="FunFam" id="3.10.20.340:FF:000002">
    <property type="entry name" value="Arginine biosynthesis bifunctional protein ArgJ, mitochondrial"/>
    <property type="match status" value="1"/>
</dbReference>
<dbReference type="FunFam" id="3.30.2330.10:FF:000001">
    <property type="entry name" value="Arginine biosynthesis bifunctional protein ArgJ, mitochondrial"/>
    <property type="match status" value="1"/>
</dbReference>
<dbReference type="Gene3D" id="3.30.2330.10">
    <property type="entry name" value="arginine biosynthesis bifunctional protein suprefamily"/>
    <property type="match status" value="1"/>
</dbReference>
<dbReference type="Gene3D" id="3.10.20.340">
    <property type="entry name" value="ArgJ beta chain, C-terminal domain"/>
    <property type="match status" value="1"/>
</dbReference>
<dbReference type="Gene3D" id="3.60.70.12">
    <property type="entry name" value="L-amino peptidase D-ALA esterase/amidase"/>
    <property type="match status" value="1"/>
</dbReference>
<dbReference type="HAMAP" id="MF_01106">
    <property type="entry name" value="ArgJ"/>
    <property type="match status" value="1"/>
</dbReference>
<dbReference type="InterPro" id="IPR002813">
    <property type="entry name" value="Arg_biosynth_ArgJ"/>
</dbReference>
<dbReference type="InterPro" id="IPR016117">
    <property type="entry name" value="ArgJ-like_dom_sf"/>
</dbReference>
<dbReference type="InterPro" id="IPR042195">
    <property type="entry name" value="ArgJ_beta_C"/>
</dbReference>
<dbReference type="NCBIfam" id="TIGR00120">
    <property type="entry name" value="ArgJ"/>
    <property type="match status" value="1"/>
</dbReference>
<dbReference type="NCBIfam" id="NF003802">
    <property type="entry name" value="PRK05388.1"/>
    <property type="match status" value="1"/>
</dbReference>
<dbReference type="PANTHER" id="PTHR23100">
    <property type="entry name" value="ARGININE BIOSYNTHESIS BIFUNCTIONAL PROTEIN ARGJ"/>
    <property type="match status" value="1"/>
</dbReference>
<dbReference type="PANTHER" id="PTHR23100:SF0">
    <property type="entry name" value="ARGININE BIOSYNTHESIS BIFUNCTIONAL PROTEIN ARGJ, MITOCHONDRIAL"/>
    <property type="match status" value="1"/>
</dbReference>
<dbReference type="Pfam" id="PF01960">
    <property type="entry name" value="ArgJ"/>
    <property type="match status" value="1"/>
</dbReference>
<dbReference type="SUPFAM" id="SSF56266">
    <property type="entry name" value="DmpA/ArgJ-like"/>
    <property type="match status" value="1"/>
</dbReference>
<proteinExistence type="inferred from homology"/>
<accession>B2B4X6</accession>
<accession>A0A090CCE3</accession>
<sequence>MVGFSRCALSQLRQPKAQLVRSFSHIPSRAYSAPSSSIPAAKKKYIPTSGTYPLGFQVSGTIVGVKPSNTTKPDLALLTSEVPCAAAAVFTKNKFQAAPVTFSRALLQKKGNKGIQGVVINSGCANAVTGKGGLEDAAKMAQAADKCLGQSDSIIVMSTGVIGQRLPIDKIINNVPKAHSALGGSHEHWLTMAKAICTTDTFPKLISRTFTLPSSPGVEYRIAGTTKGAGMIHPNMATLLGVIATDAPISSSALPSVLKHAVDRSFNSITIDGDTSTNDTVALLANGMAGGKEVVEGTPDYEAFREVLTKFSTELAQLIVRDGEGATKFVTIKVVDSASEEAARKIASTIARSPLVKTALYGKDANWGRILCATGYSLISEPSEPINDVPEIVPENTNVSFVPTDGTAELKLLVNGEPEQVDEARAAEILELEDLEILVRLGTGDKQATYWTCDYSHEYITINGDYRT</sequence>
<gene>
    <name type="ordered locus">Pa_2_2830</name>
    <name type="ORF">PODANS_2_2830</name>
</gene>
<keyword id="KW-0012">Acyltransferase</keyword>
<keyword id="KW-0028">Amino-acid biosynthesis</keyword>
<keyword id="KW-0055">Arginine biosynthesis</keyword>
<keyword id="KW-0068">Autocatalytic cleavage</keyword>
<keyword id="KW-0496">Mitochondrion</keyword>
<keyword id="KW-0511">Multifunctional enzyme</keyword>
<keyword id="KW-1185">Reference proteome</keyword>
<keyword id="KW-0808">Transferase</keyword>
<keyword id="KW-0809">Transit peptide</keyword>